<dbReference type="EMBL" id="L36944">
    <property type="protein sequence ID" value="AAA50566.1"/>
    <property type="molecule type" value="Genomic_RNA"/>
</dbReference>
<dbReference type="SMR" id="P41264"/>
<dbReference type="GlyCosmos" id="P41264">
    <property type="glycosylation" value="1 site, No reported glycans"/>
</dbReference>
<dbReference type="GO" id="GO:0044167">
    <property type="term" value="C:host cell endoplasmic reticulum membrane"/>
    <property type="evidence" value="ECO:0007669"/>
    <property type="project" value="UniProtKB-SubCell"/>
</dbReference>
<dbReference type="GO" id="GO:0044178">
    <property type="term" value="C:host cell Golgi membrane"/>
    <property type="evidence" value="ECO:0007669"/>
    <property type="project" value="UniProtKB-SubCell"/>
</dbReference>
<dbReference type="GO" id="GO:0044228">
    <property type="term" value="C:host cell surface"/>
    <property type="evidence" value="ECO:0007669"/>
    <property type="project" value="UniProtKB-SubCell"/>
</dbReference>
<dbReference type="GO" id="GO:0016020">
    <property type="term" value="C:membrane"/>
    <property type="evidence" value="ECO:0007669"/>
    <property type="project" value="UniProtKB-KW"/>
</dbReference>
<dbReference type="GO" id="GO:0055036">
    <property type="term" value="C:virion membrane"/>
    <property type="evidence" value="ECO:0007669"/>
    <property type="project" value="UniProtKB-SubCell"/>
</dbReference>
<dbReference type="GO" id="GO:0039654">
    <property type="term" value="P:fusion of virus membrane with host endosome membrane"/>
    <property type="evidence" value="ECO:0007669"/>
    <property type="project" value="UniProtKB-KW"/>
</dbReference>
<dbReference type="GO" id="GO:0046718">
    <property type="term" value="P:symbiont entry into host cell"/>
    <property type="evidence" value="ECO:0007669"/>
    <property type="project" value="UniProtKB-KW"/>
</dbReference>
<dbReference type="GO" id="GO:0019062">
    <property type="term" value="P:virion attachment to host cell"/>
    <property type="evidence" value="ECO:0007669"/>
    <property type="project" value="UniProtKB-KW"/>
</dbReference>
<dbReference type="InterPro" id="IPR048791">
    <property type="entry name" value="Gc_C_bunya"/>
</dbReference>
<dbReference type="InterPro" id="IPR002532">
    <property type="entry name" value="Hanta_Gc_N"/>
</dbReference>
<dbReference type="Pfam" id="PF20682">
    <property type="entry name" value="Hanta_Gc_C"/>
    <property type="match status" value="1"/>
</dbReference>
<dbReference type="Pfam" id="PF01561">
    <property type="entry name" value="Hanta_Gc_N"/>
    <property type="match status" value="1"/>
</dbReference>
<accession>P41264</accession>
<proteinExistence type="inferred from homology"/>
<organismHost>
    <name type="scientific">Homo sapiens</name>
    <name type="common">Human</name>
    <dbReference type="NCBI Taxonomy" id="9606"/>
</organismHost>
<organismHost>
    <name type="scientific">Myodes glareolus</name>
    <name type="common">Bank vole</name>
    <name type="synonym">Clethrionomys glareolus</name>
    <dbReference type="NCBI Taxonomy" id="447135"/>
</organismHost>
<name>GP_PUUMB</name>
<keyword id="KW-1015">Disulfide bond</keyword>
<keyword id="KW-1170">Fusion of virus membrane with host endosomal membrane</keyword>
<keyword id="KW-1168">Fusion of virus membrane with host membrane</keyword>
<keyword id="KW-0325">Glycoprotein</keyword>
<keyword id="KW-1038">Host endoplasmic reticulum</keyword>
<keyword id="KW-1040">Host Golgi apparatus</keyword>
<keyword id="KW-1043">Host membrane</keyword>
<keyword id="KW-0945">Host-virus interaction</keyword>
<keyword id="KW-0472">Membrane</keyword>
<keyword id="KW-0597">Phosphoprotein</keyword>
<keyword id="KW-0677">Repeat</keyword>
<keyword id="KW-1161">Viral attachment to host cell</keyword>
<keyword id="KW-1162">Viral penetration into host cytoplasm</keyword>
<keyword id="KW-0946">Virion</keyword>
<keyword id="KW-1160">Virus entry into host cell</keyword>
<reference key="1">
    <citation type="journal article" date="1994" name="J. Infect. Dis.">
        <title>Genetic identification of a new Puumala virus strain causing severe hemorrhagic fever with renal syndrome in Germany.</title>
        <authorList>
            <person name="Pilaski J."/>
            <person name="Feldmann H."/>
            <person name="Morzunov S.P."/>
            <person name="Rollin P.E."/>
            <person name="Ruo S.L."/>
            <person name="Lauer B."/>
            <person name="Peters C.J."/>
            <person name="Nichol S.T."/>
        </authorList>
    </citation>
    <scope>NUCLEOTIDE SEQUENCE [GENOMIC RNA]</scope>
</reference>
<reference key="2">
    <citation type="journal article" date="2014" name="Viruses">
        <title>Hantavirus Gn and Gc envelope glycoproteins: key structural units for virus cell entry and virus assembly.</title>
        <authorList>
            <person name="Cifuentes-Munoz N."/>
            <person name="Salazar-Quiroz N."/>
            <person name="Tischler N.D."/>
        </authorList>
    </citation>
    <scope>REVIEW</scope>
</reference>
<comment type="function">
    <molecule>Glycoprotein C</molecule>
    <text evidence="2">Forms homotetramers with glycoprotein N at the surface of the virion. Attaches the virion to host cell receptors including integrin ITGAV/ITGB3. This attachment induces virion internalization predominantly through clathrin-dependent endocytosis. Class II fusion protein that promotes fusion of viral membrane with host endosomal membrane after endocytosis of the virion.</text>
</comment>
<comment type="subunit">
    <molecule>Glycoprotein C</molecule>
    <text evidence="2 3 4">Homodimer. Homotetramer; forms heterotetrameric Gn-Gc spikes in the pre-fusion conformation (By similarity). Homotrimer; forms homotrimer in the post-fusion conformation at acidic pH (By similarity). Interacts (via C-terminus) with the nucleoprotein (By similarity).</text>
</comment>
<comment type="subcellular location">
    <molecule>Glycoprotein C</molecule>
    <subcellularLocation>
        <location evidence="2">Virion membrane</location>
        <topology evidence="5">Single-pass type I membrane protein</topology>
    </subcellularLocation>
    <subcellularLocation>
        <location evidence="2">Host cell surface</location>
    </subcellularLocation>
    <subcellularLocation>
        <location evidence="2">Host Golgi apparatus membrane</location>
        <topology evidence="2">Single-pass type I membrane protein</topology>
    </subcellularLocation>
    <subcellularLocation>
        <location evidence="2">Host endoplasmic reticulum membrane</location>
        <topology evidence="2">Single-pass type I membrane protein</topology>
    </subcellularLocation>
</comment>
<comment type="domain">
    <molecule>Glycoprotein C</molecule>
    <text evidence="3">The C-terminus is necessary for proper localization in the Golgi (By similarity). The cytoplasmic tail is involved in binding to the nucleocapsid (By similarity).</text>
</comment>
<comment type="PTM">
    <molecule>Envelope glycoprotein</molecule>
    <text evidence="2">Envelope polyprotein precursor is quickly cleaved in vivo just after synthesis, presumably by host signal peptidase.</text>
</comment>
<comment type="similarity">
    <text evidence="5">Belongs to the hantavirus envelope glycoprotein family.</text>
</comment>
<evidence type="ECO:0000250" key="1"/>
<evidence type="ECO:0000250" key="2">
    <source>
        <dbReference type="UniProtKB" id="P08668"/>
    </source>
</evidence>
<evidence type="ECO:0000250" key="3">
    <source>
        <dbReference type="UniProtKB" id="P27312"/>
    </source>
</evidence>
<evidence type="ECO:0000250" key="4">
    <source>
        <dbReference type="UniProtKB" id="P41266"/>
    </source>
</evidence>
<evidence type="ECO:0000305" key="5"/>
<protein>
    <recommendedName>
        <fullName>Envelope glycoprotein</fullName>
    </recommendedName>
    <alternativeName>
        <fullName>M polyprotein</fullName>
    </alternativeName>
    <component>
        <recommendedName>
            <fullName evidence="2">Glycoprotein C</fullName>
            <shortName>Gc</shortName>
        </recommendedName>
        <alternativeName>
            <fullName>Glycoprotein G2</fullName>
        </alternativeName>
    </component>
</protein>
<gene>
    <name type="primary">GP</name>
</gene>
<organism>
    <name type="scientific">Puumala virus (strain Berkel)</name>
    <dbReference type="NCBI Taxonomy" id="38998"/>
    <lineage>
        <taxon>Viruses</taxon>
        <taxon>Riboviria</taxon>
        <taxon>Orthornavirae</taxon>
        <taxon>Negarnaviricota</taxon>
        <taxon>Polyploviricotina</taxon>
        <taxon>Ellioviricetes</taxon>
        <taxon>Bunyavirales</taxon>
        <taxon>Hantaviridae</taxon>
        <taxon>Mammantavirinae</taxon>
        <taxon>Orthohantavirus</taxon>
        <taxon>Orthohantavirus puumalaense</taxon>
    </lineage>
</organism>
<feature type="chain" id="PRO_0000232519" description="Envelope glycoprotein">
    <location>
        <begin position="1" status="less than"/>
        <end position="275" status="greater than"/>
    </location>
</feature>
<feature type="chain" id="PRO_0000036821" description="Glycoprotein C" evidence="1">
    <location>
        <begin position="1" status="less than"/>
        <end position="275" status="greater than"/>
    </location>
</feature>
<feature type="glycosylation site" description="N-linked (GlcNAc...) asparagine; by host" evidence="4">
    <location>
        <position position="122"/>
    </location>
</feature>
<feature type="disulfide bond" evidence="2">
    <location>
        <begin position="1"/>
        <end position="10"/>
    </location>
</feature>
<feature type="disulfide bond" evidence="2">
    <location>
        <begin position="18"/>
        <end position="27"/>
    </location>
</feature>
<feature type="disulfide bond" evidence="2">
    <location>
        <begin position="58"/>
        <end position="62"/>
    </location>
</feature>
<feature type="disulfide bond" evidence="2">
    <location>
        <begin position="164"/>
        <end position="194"/>
    </location>
</feature>
<feature type="disulfide bond" evidence="2">
    <location>
        <begin position="187"/>
        <end position="239"/>
    </location>
</feature>
<feature type="disulfide bond" evidence="2">
    <location>
        <begin position="204"/>
        <end position="209"/>
    </location>
</feature>
<feature type="disulfide bond" evidence="2">
    <location>
        <begin position="240"/>
        <end position="245"/>
    </location>
</feature>
<feature type="non-terminal residue">
    <location>
        <position position="1"/>
    </location>
</feature>
<feature type="non-terminal residue">
    <location>
        <position position="275"/>
    </location>
</feature>
<sequence>CIQLGTEQTCKSVDSNDCLVTTSVKVCLIGTVSKFQPSDTLLFLGPLEQGGLIFKQWCTTTCQFGDPGDIMSTPVGMKCPELSGSFRKKCAFATTPVCQFDGNTISGYKRMIATKDSFQSFNVTEPHISASSLEWIDPDSSLRDHINVIVGRDLSFQDLSETPCQVDLTTTSIDGAWGSGVGFNLICSVSLTECSTFLTSIKACDSAMCYGSTTANLLRGQNTVHIVGKGGHSGSKFMCCHDTKCSSTGLIAAAPHLDRVTGYNQADSDKIFDDG</sequence>